<name>NU4M_GADMO</name>
<gene>
    <name type="primary">MT-ND4</name>
    <name type="synonym">MTND4</name>
    <name type="synonym">NADH4</name>
    <name type="synonym">ND4</name>
</gene>
<protein>
    <recommendedName>
        <fullName>NADH-ubiquinone oxidoreductase chain 4</fullName>
        <ecNumber>7.1.1.2</ecNumber>
    </recommendedName>
    <alternativeName>
        <fullName>NADH dehydrogenase subunit 4</fullName>
    </alternativeName>
</protein>
<keyword id="KW-0249">Electron transport</keyword>
<keyword id="KW-0472">Membrane</keyword>
<keyword id="KW-0496">Mitochondrion</keyword>
<keyword id="KW-0520">NAD</keyword>
<keyword id="KW-1185">Reference proteome</keyword>
<keyword id="KW-0679">Respiratory chain</keyword>
<keyword id="KW-1278">Translocase</keyword>
<keyword id="KW-0812">Transmembrane</keyword>
<keyword id="KW-1133">Transmembrane helix</keyword>
<keyword id="KW-0813">Transport</keyword>
<keyword id="KW-0830">Ubiquinone</keyword>
<dbReference type="EC" id="7.1.1.2"/>
<dbReference type="EMBL" id="X99772">
    <property type="status" value="NOT_ANNOTATED_CDS"/>
    <property type="molecule type" value="Genomic_DNA"/>
</dbReference>
<dbReference type="RefSeq" id="NP_007818.2">
    <property type="nucleotide sequence ID" value="NC_002081.1"/>
</dbReference>
<dbReference type="SMR" id="P55781"/>
<dbReference type="GeneID" id="808450"/>
<dbReference type="CTD" id="4538"/>
<dbReference type="OrthoDB" id="564260at2759"/>
<dbReference type="Proteomes" id="UP000694546">
    <property type="component" value="Unplaced"/>
</dbReference>
<dbReference type="GO" id="GO:0031966">
    <property type="term" value="C:mitochondrial membrane"/>
    <property type="evidence" value="ECO:0007669"/>
    <property type="project" value="UniProtKB-SubCell"/>
</dbReference>
<dbReference type="GO" id="GO:0008137">
    <property type="term" value="F:NADH dehydrogenase (ubiquinone) activity"/>
    <property type="evidence" value="ECO:0007669"/>
    <property type="project" value="UniProtKB-EC"/>
</dbReference>
<dbReference type="GO" id="GO:0048039">
    <property type="term" value="F:ubiquinone binding"/>
    <property type="evidence" value="ECO:0007669"/>
    <property type="project" value="TreeGrafter"/>
</dbReference>
<dbReference type="GO" id="GO:0042773">
    <property type="term" value="P:ATP synthesis coupled electron transport"/>
    <property type="evidence" value="ECO:0007669"/>
    <property type="project" value="InterPro"/>
</dbReference>
<dbReference type="GO" id="GO:0015990">
    <property type="term" value="P:electron transport coupled proton transport"/>
    <property type="evidence" value="ECO:0007669"/>
    <property type="project" value="TreeGrafter"/>
</dbReference>
<dbReference type="InterPro" id="IPR000260">
    <property type="entry name" value="NADH4_N"/>
</dbReference>
<dbReference type="InterPro" id="IPR010227">
    <property type="entry name" value="NADH_Q_OxRdtase_chainM/4"/>
</dbReference>
<dbReference type="InterPro" id="IPR003918">
    <property type="entry name" value="NADH_UbQ_OxRdtase"/>
</dbReference>
<dbReference type="InterPro" id="IPR001750">
    <property type="entry name" value="ND/Mrp_TM"/>
</dbReference>
<dbReference type="NCBIfam" id="TIGR01972">
    <property type="entry name" value="NDH_I_M"/>
    <property type="match status" value="1"/>
</dbReference>
<dbReference type="PANTHER" id="PTHR43507">
    <property type="entry name" value="NADH-UBIQUINONE OXIDOREDUCTASE CHAIN 4"/>
    <property type="match status" value="1"/>
</dbReference>
<dbReference type="PANTHER" id="PTHR43507:SF20">
    <property type="entry name" value="NADH-UBIQUINONE OXIDOREDUCTASE CHAIN 4"/>
    <property type="match status" value="1"/>
</dbReference>
<dbReference type="Pfam" id="PF01059">
    <property type="entry name" value="Oxidored_q5_N"/>
    <property type="match status" value="1"/>
</dbReference>
<dbReference type="Pfam" id="PF00361">
    <property type="entry name" value="Proton_antipo_M"/>
    <property type="match status" value="1"/>
</dbReference>
<dbReference type="PRINTS" id="PR01437">
    <property type="entry name" value="NUOXDRDTASE4"/>
</dbReference>
<sequence>MLKILIPTLFLLPTTWLTSSKWLWPTALTQSMLIALGSITWLNNTTDTGWTALNSYIGTDPLSTPLLVLSCWLLPLMLLASQNHLSSEPMNRQRMYITLLATLQLFLILAFGATEMIMFYVMFEATLIPTLLVITRWGNHTERLNAGTYFLFYTLAGSLPLLVALLMLQNNTGTLSLLIIPYAKPLLLMPFGSKIWWAACMIAFLVKMPLYGMHLWLPKAHVEAPVAGSMVLAAVLLKLGGYGMMRLMIVLDPLSKEMVYPFIVLALWGVIITGSICLRQTDLKSLIAYSSVSHMGLVAGGILIQTPWGFTGALILMIAHGLASSALFCLANTNYERTHSRTMLLARGLQIALPLMTTWWFIASLANLALPPLPNLMGELMILTSLFNWSAWTLILTGIGTLITAAYSLYMFLMSQRGPLPQHMLALPPSYTREHLLMALHLIPLLLIILKPALLWGWFA</sequence>
<reference key="1">
    <citation type="journal article" date="1996" name="Mol. Mar. Biol. Biotechnol.">
        <title>The complete mitochondrial DNA sequence of Atlantic cod (Gadus morhua): relevance to taxonomic studies among codfishes.</title>
        <authorList>
            <person name="Johansen S."/>
            <person name="Bakke I."/>
        </authorList>
    </citation>
    <scope>NUCLEOTIDE SEQUENCE [GENOMIC DNA]</scope>
    <source>
        <strain>Norwegian coastal 1</strain>
    </source>
</reference>
<feature type="chain" id="PRO_0000117936" description="NADH-ubiquinone oxidoreductase chain 4">
    <location>
        <begin position="1"/>
        <end position="460"/>
    </location>
</feature>
<feature type="transmembrane region" description="Helical" evidence="2">
    <location>
        <begin position="22"/>
        <end position="42"/>
    </location>
</feature>
<feature type="transmembrane region" description="Helical" evidence="2">
    <location>
        <begin position="61"/>
        <end position="81"/>
    </location>
</feature>
<feature type="transmembrane region" description="Helical" evidence="2">
    <location>
        <begin position="94"/>
        <end position="113"/>
    </location>
</feature>
<feature type="transmembrane region" description="Helical" evidence="2">
    <location>
        <begin position="117"/>
        <end position="139"/>
    </location>
</feature>
<feature type="transmembrane region" description="Helical" evidence="2">
    <location>
        <begin position="148"/>
        <end position="168"/>
    </location>
</feature>
<feature type="transmembrane region" description="Helical" evidence="2">
    <location>
        <begin position="195"/>
        <end position="217"/>
    </location>
</feature>
<feature type="transmembrane region" description="Helical" evidence="2">
    <location>
        <begin position="225"/>
        <end position="245"/>
    </location>
</feature>
<feature type="transmembrane region" description="Helical" evidence="2">
    <location>
        <begin position="258"/>
        <end position="278"/>
    </location>
</feature>
<feature type="transmembrane region" description="Helical" evidence="2">
    <location>
        <begin position="285"/>
        <end position="304"/>
    </location>
</feature>
<feature type="transmembrane region" description="Helical" evidence="2">
    <location>
        <begin position="308"/>
        <end position="330"/>
    </location>
</feature>
<feature type="transmembrane region" description="Helical" evidence="2">
    <location>
        <begin position="351"/>
        <end position="371"/>
    </location>
</feature>
<feature type="transmembrane region" description="Helical" evidence="2">
    <location>
        <begin position="394"/>
        <end position="414"/>
    </location>
</feature>
<feature type="transmembrane region" description="Helical" evidence="2">
    <location>
        <begin position="436"/>
        <end position="456"/>
    </location>
</feature>
<accession>P55781</accession>
<organism>
    <name type="scientific">Gadus morhua</name>
    <name type="common">Atlantic cod</name>
    <dbReference type="NCBI Taxonomy" id="8049"/>
    <lineage>
        <taxon>Eukaryota</taxon>
        <taxon>Metazoa</taxon>
        <taxon>Chordata</taxon>
        <taxon>Craniata</taxon>
        <taxon>Vertebrata</taxon>
        <taxon>Euteleostomi</taxon>
        <taxon>Actinopterygii</taxon>
        <taxon>Neopterygii</taxon>
        <taxon>Teleostei</taxon>
        <taxon>Neoteleostei</taxon>
        <taxon>Acanthomorphata</taxon>
        <taxon>Zeiogadaria</taxon>
        <taxon>Gadariae</taxon>
        <taxon>Gadiformes</taxon>
        <taxon>Gadoidei</taxon>
        <taxon>Gadidae</taxon>
        <taxon>Gadus</taxon>
    </lineage>
</organism>
<evidence type="ECO:0000250" key="1"/>
<evidence type="ECO:0000255" key="2"/>
<evidence type="ECO:0000305" key="3"/>
<proteinExistence type="inferred from homology"/>
<geneLocation type="mitochondrion"/>
<comment type="function">
    <text evidence="1">Core subunit of the mitochondrial membrane respiratory chain NADH dehydrogenase (Complex I) that is believed to belong to the minimal assembly required for catalysis. Complex I functions in the transfer of electrons from NADH to the respiratory chain. The immediate electron acceptor for the enzyme is believed to be ubiquinone (By similarity).</text>
</comment>
<comment type="catalytic activity">
    <reaction>
        <text>a ubiquinone + NADH + 5 H(+)(in) = a ubiquinol + NAD(+) + 4 H(+)(out)</text>
        <dbReference type="Rhea" id="RHEA:29091"/>
        <dbReference type="Rhea" id="RHEA-COMP:9565"/>
        <dbReference type="Rhea" id="RHEA-COMP:9566"/>
        <dbReference type="ChEBI" id="CHEBI:15378"/>
        <dbReference type="ChEBI" id="CHEBI:16389"/>
        <dbReference type="ChEBI" id="CHEBI:17976"/>
        <dbReference type="ChEBI" id="CHEBI:57540"/>
        <dbReference type="ChEBI" id="CHEBI:57945"/>
        <dbReference type="EC" id="7.1.1.2"/>
    </reaction>
</comment>
<comment type="subcellular location">
    <subcellularLocation>
        <location evidence="1">Mitochondrion membrane</location>
        <topology evidence="1">Multi-pass membrane protein</topology>
    </subcellularLocation>
</comment>
<comment type="similarity">
    <text evidence="3">Belongs to the complex I subunit 4 family.</text>
</comment>